<accession>Q8CKU7</accession>
<accession>Q74VP6</accession>
<gene>
    <name evidence="5" type="ordered locus">y2835</name>
    <name evidence="6" type="ordered locus">YP_1249</name>
</gene>
<organism>
    <name type="scientific">Yersinia pestis</name>
    <dbReference type="NCBI Taxonomy" id="632"/>
    <lineage>
        <taxon>Bacteria</taxon>
        <taxon>Pseudomonadati</taxon>
        <taxon>Pseudomonadota</taxon>
        <taxon>Gammaproteobacteria</taxon>
        <taxon>Enterobacterales</taxon>
        <taxon>Yersiniaceae</taxon>
        <taxon>Yersinia</taxon>
    </lineage>
</organism>
<keyword id="KW-0002">3D-structure</keyword>
<keyword id="KW-0521">NADP</keyword>
<keyword id="KW-0560">Oxidoreductase</keyword>
<name>ODH_YERPE</name>
<dbReference type="EC" id="1.5.1.-" evidence="1"/>
<dbReference type="EMBL" id="AE009952">
    <property type="protein sequence ID" value="AAM86386.1"/>
    <property type="status" value="ALT_INIT"/>
    <property type="molecule type" value="Genomic_DNA"/>
</dbReference>
<dbReference type="EMBL" id="AE017042">
    <property type="protein sequence ID" value="AAS61492.1"/>
    <property type="status" value="ALT_INIT"/>
    <property type="molecule type" value="Genomic_DNA"/>
</dbReference>
<dbReference type="RefSeq" id="WP_002211373.1">
    <property type="nucleotide sequence ID" value="NZ_WUCM01000027.1"/>
</dbReference>
<dbReference type="PDB" id="6C4L">
    <property type="method" value="X-ray"/>
    <property type="resolution" value="2.00 A"/>
    <property type="chains" value="C=1-456"/>
</dbReference>
<dbReference type="PDB" id="6C4M">
    <property type="method" value="X-ray"/>
    <property type="resolution" value="1.94 A"/>
    <property type="chains" value="C=1-456"/>
</dbReference>
<dbReference type="PDBsum" id="6C4L"/>
<dbReference type="PDBsum" id="6C4M"/>
<dbReference type="SMR" id="Q8CKU7"/>
<dbReference type="STRING" id="214092.YPO1347"/>
<dbReference type="PaxDb" id="214092-YPO1347"/>
<dbReference type="DNASU" id="1147782"/>
<dbReference type="EnsemblBacteria" id="AAS61492">
    <property type="protein sequence ID" value="AAS61492"/>
    <property type="gene ID" value="YP_1249"/>
</dbReference>
<dbReference type="KEGG" id="ypk:y2835"/>
<dbReference type="KEGG" id="ypm:YP_1249"/>
<dbReference type="HOGENOM" id="CLU_637619_0_0_6"/>
<dbReference type="OMA" id="CPARETW"/>
<dbReference type="OrthoDB" id="3652431at2"/>
<dbReference type="SABIO-RK" id="Q8CKU7"/>
<dbReference type="Proteomes" id="UP000001019">
    <property type="component" value="Chromosome"/>
</dbReference>
<dbReference type="Proteomes" id="UP000002490">
    <property type="component" value="Chromosome"/>
</dbReference>
<dbReference type="GO" id="GO:0016491">
    <property type="term" value="F:oxidoreductase activity"/>
    <property type="evidence" value="ECO:0007669"/>
    <property type="project" value="UniProtKB-KW"/>
</dbReference>
<dbReference type="Gene3D" id="3.40.50.720">
    <property type="entry name" value="NAD(P)-binding Rossmann-like Domain"/>
    <property type="match status" value="1"/>
</dbReference>
<dbReference type="InterPro" id="IPR036291">
    <property type="entry name" value="NAD(P)-bd_dom_sf"/>
</dbReference>
<dbReference type="InterPro" id="IPR016935">
    <property type="entry name" value="Opine_metallophore_DH"/>
</dbReference>
<dbReference type="Pfam" id="PF10100">
    <property type="entry name" value="Staph_opine_DH"/>
    <property type="match status" value="1"/>
</dbReference>
<dbReference type="PIRSF" id="PIRSF029692">
    <property type="entry name" value="UCP029692"/>
    <property type="match status" value="1"/>
</dbReference>
<dbReference type="SUPFAM" id="SSF51735">
    <property type="entry name" value="NAD(P)-binding Rossmann-fold domains"/>
    <property type="match status" value="1"/>
</dbReference>
<evidence type="ECO:0000269" key="1">
    <source>
    </source>
</evidence>
<evidence type="ECO:0000303" key="2">
    <source>
    </source>
</evidence>
<evidence type="ECO:0000305" key="3"/>
<evidence type="ECO:0000305" key="4">
    <source>
    </source>
</evidence>
<evidence type="ECO:0000312" key="5">
    <source>
        <dbReference type="EMBL" id="AAM86386.1"/>
    </source>
</evidence>
<evidence type="ECO:0000312" key="6">
    <source>
        <dbReference type="EMBL" id="AAS61492.1"/>
    </source>
</evidence>
<evidence type="ECO:0007744" key="7">
    <source>
        <dbReference type="PDB" id="6C4L"/>
    </source>
</evidence>
<evidence type="ECO:0007744" key="8">
    <source>
        <dbReference type="PDB" id="6C4M"/>
    </source>
</evidence>
<evidence type="ECO:0007829" key="9">
    <source>
        <dbReference type="PDB" id="6C4M"/>
    </source>
</evidence>
<sequence>MHNTLPTLILGAGPAAIQLAVDISATGDARLGLYNRPSTKGERLKQYLALTPTLYLQGTGKAQATQKESSVTIDCYIDQLAQAVGDWQRLILAVPADHYYAVLQQIPWAALPQLKSVILLSSSMGSGLMVQNLLNAAGKRDVEVISLSSYYADTKYIRAETQDISANTQDINAGTQDIGAIQPYRAYTKAFKQRIYLANQWGNAGSAEMSWLTAVLARHHIDTLPCSNLLAAERFSITNYVHPPLALADTTLQALFYPEQRSQYLYKTQPEGPVCPAVIADLAGLADDYKRLLNRLGVEEINLLRFLNDDNYPVPASMVSRRWIDEFPQLPPLEQQYALFVRYTALLVDPYSTPDEQGRFYDFSAVKVATVYQDANALWHLPRVPLEDVHKLRTLLLLAGALDVVMPTAQRLLQRFQQALKAFIDRVGEEHCHPSLLGDDCDRQAAIIEQQWRSQT</sequence>
<reference key="1">
    <citation type="journal article" date="2002" name="J. Bacteriol.">
        <title>Genome sequence of Yersinia pestis KIM.</title>
        <authorList>
            <person name="Deng W."/>
            <person name="Burland V."/>
            <person name="Plunkett G. III"/>
            <person name="Boutin A."/>
            <person name="Mayhew G.F."/>
            <person name="Liss P."/>
            <person name="Perna N.T."/>
            <person name="Rose D.J."/>
            <person name="Mau B."/>
            <person name="Zhou S."/>
            <person name="Schwartz D.C."/>
            <person name="Fetherston J.D."/>
            <person name="Lindler L.E."/>
            <person name="Brubaker R.R."/>
            <person name="Plano G.V."/>
            <person name="Straley S.C."/>
            <person name="McDonough K.A."/>
            <person name="Nilles M.L."/>
            <person name="Matson J.S."/>
            <person name="Blattner F.R."/>
            <person name="Perry R.D."/>
        </authorList>
    </citation>
    <scope>NUCLEOTIDE SEQUENCE [LARGE SCALE GENOMIC DNA]</scope>
    <source>
        <strain>KIM10+ / Biovar Mediaevalis</strain>
    </source>
</reference>
<reference key="2">
    <citation type="journal article" date="2004" name="DNA Res.">
        <title>Complete genome sequence of Yersinia pestis strain 91001, an isolate avirulent to humans.</title>
        <authorList>
            <person name="Song Y."/>
            <person name="Tong Z."/>
            <person name="Wang J."/>
            <person name="Wang L."/>
            <person name="Guo Z."/>
            <person name="Han Y."/>
            <person name="Zhang J."/>
            <person name="Pei D."/>
            <person name="Zhou D."/>
            <person name="Qin H."/>
            <person name="Pang X."/>
            <person name="Han Y."/>
            <person name="Zhai J."/>
            <person name="Li M."/>
            <person name="Cui B."/>
            <person name="Qi Z."/>
            <person name="Jin L."/>
            <person name="Dai R."/>
            <person name="Chen F."/>
            <person name="Li S."/>
            <person name="Ye C."/>
            <person name="Du Z."/>
            <person name="Lin W."/>
            <person name="Wang J."/>
            <person name="Yu J."/>
            <person name="Yang H."/>
            <person name="Wang J."/>
            <person name="Huang P."/>
            <person name="Yang R."/>
        </authorList>
    </citation>
    <scope>NUCLEOTIDE SEQUENCE [LARGE SCALE GENOMIC DNA]</scope>
    <source>
        <strain>91001 / Biovar Mediaevalis</strain>
    </source>
</reference>
<reference evidence="7 8" key="3">
    <citation type="journal article" date="2018" name="J. Biol. Chem.">
        <title>Staphylopine, pseudopaline, and yersinopine dehydrogenases: A structural and kinetic analysis of a new functional class of opine dehydrogenase.</title>
        <authorList>
            <person name="McFarlane J.S."/>
            <person name="Davis C.L."/>
            <person name="Lamb A.L."/>
        </authorList>
    </citation>
    <scope>X-RAY CRYSTALLOGRAPHY (1.94 ANGSTROMS) OF APOENZYME AND IN COMPLEX WITH NADP</scope>
    <scope>FUNCTION</scope>
    <scope>CATALYTIC ACTIVITY</scope>
    <scope>BIOPHYSICOCHEMICAL PROPERTIES</scope>
    <scope>SUBSTRATE SPECIFICITY</scope>
    <scope>SUBUNIT</scope>
    <scope>ACTIVE SITE</scope>
</reference>
<protein>
    <recommendedName>
        <fullName evidence="4">Yersinopine synthase</fullName>
        <ecNumber evidence="1">1.5.1.-</ecNumber>
    </recommendedName>
    <alternativeName>
        <fullName evidence="2">Opine dehydrogenase</fullName>
        <shortName evidence="2">ODH</shortName>
    </alternativeName>
    <alternativeName>
        <fullName evidence="2">Yersinopine dehydrogenase</fullName>
    </alternativeName>
</protein>
<comment type="function">
    <text evidence="1">Catalyzes the NADPH-dependent reductive condensation of pyruvate to the intermediate formed by the adjacently encoded enzyme y2836, namely (2S)-2-amino-4-{[(1S)-1-carboxy-2-(1H-imidazol-4-yl)ethyl]amino}butanoate, leading to the production of yersinopine. This is the last step in the biosynthesis of the metallophore yersinopine, which is involved in metal acquisition and thus enables bacterial growth inside the host, where metal access is limited. Therefore, this enzyme probably contributes to Yersinia virulence. Cannot use alpha-ketoglutarate in place of pyruvate, and displays only poor efficiency with oxaloacetate and glyoxylate.</text>
</comment>
<comment type="catalytic activity">
    <reaction evidence="1">
        <text>yersinopine + NADP(+) + H2O = (2S)-2-amino-4-{[(1S)-1-carboxy-2-(1H-imidazol-4-yl)ethyl]amino}butanoate + pyruvate + NADPH + H(+)</text>
        <dbReference type="Rhea" id="RHEA:59792"/>
        <dbReference type="ChEBI" id="CHEBI:15361"/>
        <dbReference type="ChEBI" id="CHEBI:15377"/>
        <dbReference type="ChEBI" id="CHEBI:15378"/>
        <dbReference type="ChEBI" id="CHEBI:57783"/>
        <dbReference type="ChEBI" id="CHEBI:58349"/>
        <dbReference type="ChEBI" id="CHEBI:143196"/>
        <dbReference type="ChEBI" id="CHEBI:143224"/>
    </reaction>
    <physiologicalReaction direction="right-to-left" evidence="4">
        <dbReference type="Rhea" id="RHEA:59794"/>
    </physiologicalReaction>
</comment>
<comment type="biophysicochemical properties">
    <kinetics>
        <KM evidence="1">73 uM for pyruvate (at pH 8.0 and 22 degrees Celsius)</KM>
        <KM evidence="1">1900 uM for oxaloacetate (at pH 8.0 and 22 degrees Celsius)</KM>
        <KM evidence="1">1900 uM for glyoxylate (at pH 8.0 and 22 degrees Celsius)</KM>
        <text evidence="1">kcat is 0.30 sec(-1) with pyruvate as substrate. kcat is 0.29 sec(-1) with oxaloacetate as substrate. kcat is 0.22 sec(-1) with glyoxylate as substrate (at pH 8.0 and 22 degrees Celsius).</text>
    </kinetics>
</comment>
<comment type="subunit">
    <text evidence="1">Homodimer.</text>
</comment>
<comment type="similarity">
    <text evidence="3">Belongs to the staphylopine dehydrogenase family.</text>
</comment>
<comment type="sequence caution" evidence="3">
    <conflict type="erroneous initiation">
        <sequence resource="EMBL-CDS" id="AAM86386"/>
    </conflict>
    <text>Extended N-terminus.</text>
</comment>
<comment type="sequence caution" evidence="3">
    <conflict type="erroneous initiation">
        <sequence resource="EMBL-CDS" id="AAS61492"/>
    </conflict>
    <text>Extended N-terminus.</text>
</comment>
<feature type="chain" id="PRO_0000447041" description="Yersinopine synthase">
    <location>
        <begin position="1"/>
        <end position="456"/>
    </location>
</feature>
<feature type="active site" description="Proton donor/acceptor" evidence="4">
    <location>
        <position position="242"/>
    </location>
</feature>
<feature type="binding site" evidence="1">
    <location>
        <begin position="12"/>
        <end position="15"/>
    </location>
    <ligand>
        <name>NADP(+)</name>
        <dbReference type="ChEBI" id="CHEBI:58349"/>
    </ligand>
</feature>
<feature type="binding site" evidence="1">
    <location>
        <begin position="35"/>
        <end position="40"/>
    </location>
    <ligand>
        <name>NADP(+)</name>
        <dbReference type="ChEBI" id="CHEBI:58349"/>
    </ligand>
</feature>
<feature type="binding site" evidence="1">
    <location>
        <position position="154"/>
    </location>
    <ligand>
        <name>NADP(+)</name>
        <dbReference type="ChEBI" id="CHEBI:58349"/>
    </ligand>
</feature>
<feature type="helix" evidence="9">
    <location>
        <begin position="2"/>
        <end position="4"/>
    </location>
</feature>
<feature type="strand" evidence="9">
    <location>
        <begin position="7"/>
        <end position="10"/>
    </location>
</feature>
<feature type="helix" evidence="9">
    <location>
        <begin position="14"/>
        <end position="26"/>
    </location>
</feature>
<feature type="strand" evidence="9">
    <location>
        <begin position="31"/>
        <end position="34"/>
    </location>
</feature>
<feature type="helix" evidence="9">
    <location>
        <begin position="39"/>
        <end position="50"/>
    </location>
</feature>
<feature type="strand" evidence="9">
    <location>
        <begin position="53"/>
        <end position="58"/>
    </location>
</feature>
<feature type="helix" evidence="9">
    <location>
        <begin position="60"/>
        <end position="64"/>
    </location>
</feature>
<feature type="strand" evidence="9">
    <location>
        <begin position="68"/>
        <end position="72"/>
    </location>
</feature>
<feature type="strand" evidence="9">
    <location>
        <begin position="74"/>
        <end position="78"/>
    </location>
</feature>
<feature type="helix" evidence="9">
    <location>
        <begin position="80"/>
        <end position="82"/>
    </location>
</feature>
<feature type="strand" evidence="9">
    <location>
        <begin position="89"/>
        <end position="92"/>
    </location>
</feature>
<feature type="helix" evidence="9">
    <location>
        <begin position="96"/>
        <end position="98"/>
    </location>
</feature>
<feature type="helix" evidence="9">
    <location>
        <begin position="99"/>
        <end position="103"/>
    </location>
</feature>
<feature type="helix" evidence="9">
    <location>
        <begin position="108"/>
        <end position="110"/>
    </location>
</feature>
<feature type="strand" evidence="9">
    <location>
        <begin position="116"/>
        <end position="119"/>
    </location>
</feature>
<feature type="helix" evidence="9">
    <location>
        <begin position="126"/>
        <end position="136"/>
    </location>
</feature>
<feature type="strand" evidence="9">
    <location>
        <begin position="142"/>
        <end position="149"/>
    </location>
</feature>
<feature type="strand" evidence="9">
    <location>
        <begin position="151"/>
        <end position="155"/>
    </location>
</feature>
<feature type="strand" evidence="9">
    <location>
        <begin position="185"/>
        <end position="191"/>
    </location>
</feature>
<feature type="strand" evidence="9">
    <location>
        <begin position="193"/>
        <end position="199"/>
    </location>
</feature>
<feature type="helix" evidence="9">
    <location>
        <begin position="207"/>
        <end position="217"/>
    </location>
</feature>
<feature type="turn" evidence="9">
    <location>
        <begin position="218"/>
        <end position="220"/>
    </location>
</feature>
<feature type="strand" evidence="9">
    <location>
        <begin position="222"/>
        <end position="225"/>
    </location>
</feature>
<feature type="helix" evidence="9">
    <location>
        <begin position="229"/>
        <end position="233"/>
    </location>
</feature>
<feature type="helix" evidence="9">
    <location>
        <begin position="237"/>
        <end position="246"/>
    </location>
</feature>
<feature type="helix" evidence="9">
    <location>
        <begin position="249"/>
        <end position="256"/>
    </location>
</feature>
<feature type="turn" evidence="9">
    <location>
        <begin position="269"/>
        <end position="271"/>
    </location>
</feature>
<feature type="strand" evidence="9">
    <location>
        <begin position="272"/>
        <end position="275"/>
    </location>
</feature>
<feature type="helix" evidence="9">
    <location>
        <begin position="276"/>
        <end position="295"/>
    </location>
</feature>
<feature type="helix" evidence="9">
    <location>
        <begin position="303"/>
        <end position="310"/>
    </location>
</feature>
<feature type="turn" evidence="9">
    <location>
        <begin position="316"/>
        <end position="318"/>
    </location>
</feature>
<feature type="helix" evidence="9">
    <location>
        <begin position="321"/>
        <end position="326"/>
    </location>
</feature>
<feature type="helix" evidence="9">
    <location>
        <begin position="327"/>
        <end position="329"/>
    </location>
</feature>
<feature type="helix" evidence="9">
    <location>
        <begin position="332"/>
        <end position="346"/>
    </location>
</feature>
<feature type="helix" evidence="9">
    <location>
        <begin position="363"/>
        <end position="365"/>
    </location>
</feature>
<feature type="helix" evidence="9">
    <location>
        <begin position="383"/>
        <end position="401"/>
    </location>
</feature>
<feature type="helix" evidence="9">
    <location>
        <begin position="407"/>
        <end position="427"/>
    </location>
</feature>
<feature type="helix" evidence="9">
    <location>
        <begin position="429"/>
        <end position="431"/>
    </location>
</feature>
<feature type="helix" evidence="9">
    <location>
        <begin position="434"/>
        <end position="436"/>
    </location>
</feature>
<feature type="helix" evidence="9">
    <location>
        <begin position="441"/>
        <end position="453"/>
    </location>
</feature>
<proteinExistence type="evidence at protein level"/>